<accession>Q6EUN0</accession>
<accession>Q0E030</accession>
<protein>
    <recommendedName>
        <fullName>ASC1-like protein 1</fullName>
    </recommendedName>
    <alternativeName>
        <fullName>Alternaria stem canker resistance-like protein 1</fullName>
    </alternativeName>
</protein>
<comment type="function">
    <text evidence="1">Mediates resistance to sphinganine-analog mycotoxins (SAMs) by restoring the sphingolipid biosynthesis. Could salvage the transport of GPI-anchored proteins from the endoplasmic reticulum to the Golgi apparatus in ceramides-depleted cells after SAM exposure (By similarity).</text>
</comment>
<comment type="subcellular location">
    <subcellularLocation>
        <location evidence="1">Endoplasmic reticulum membrane</location>
        <topology evidence="1">Multi-pass membrane protein</topology>
    </subcellularLocation>
</comment>
<gene>
    <name type="ordered locus">Os02g0581300</name>
    <name type="ordered locus">LOC_Os02g37080</name>
    <name type="ORF">OJ1115_A05.19</name>
</gene>
<organism>
    <name type="scientific">Oryza sativa subsp. japonica</name>
    <name type="common">Rice</name>
    <dbReference type="NCBI Taxonomy" id="39947"/>
    <lineage>
        <taxon>Eukaryota</taxon>
        <taxon>Viridiplantae</taxon>
        <taxon>Streptophyta</taxon>
        <taxon>Embryophyta</taxon>
        <taxon>Tracheophyta</taxon>
        <taxon>Spermatophyta</taxon>
        <taxon>Magnoliopsida</taxon>
        <taxon>Liliopsida</taxon>
        <taxon>Poales</taxon>
        <taxon>Poaceae</taxon>
        <taxon>BOP clade</taxon>
        <taxon>Oryzoideae</taxon>
        <taxon>Oryzeae</taxon>
        <taxon>Oryzinae</taxon>
        <taxon>Oryza</taxon>
        <taxon>Oryza sativa</taxon>
    </lineage>
</organism>
<dbReference type="EMBL" id="AP003999">
    <property type="protein sequence ID" value="BAD27639.1"/>
    <property type="molecule type" value="Genomic_DNA"/>
</dbReference>
<dbReference type="EMBL" id="AP008208">
    <property type="protein sequence ID" value="BAF09158.1"/>
    <property type="molecule type" value="Genomic_DNA"/>
</dbReference>
<dbReference type="EMBL" id="AP014958">
    <property type="protein sequence ID" value="BAS79426.1"/>
    <property type="molecule type" value="Genomic_DNA"/>
</dbReference>
<dbReference type="EMBL" id="AK071553">
    <property type="protein sequence ID" value="BAG92552.1"/>
    <property type="molecule type" value="mRNA"/>
</dbReference>
<dbReference type="RefSeq" id="XP_015627118.1">
    <property type="nucleotide sequence ID" value="XM_015771632.1"/>
</dbReference>
<dbReference type="SMR" id="Q6EUN0"/>
<dbReference type="FunCoup" id="Q6EUN0">
    <property type="interactions" value="2936"/>
</dbReference>
<dbReference type="STRING" id="39947.Q6EUN0"/>
<dbReference type="PaxDb" id="39947-Q6EUN0"/>
<dbReference type="EnsemblPlants" id="Os02t0581300-01">
    <property type="protein sequence ID" value="Os02t0581300-01"/>
    <property type="gene ID" value="Os02g0581300"/>
</dbReference>
<dbReference type="Gramene" id="Os02t0581300-01">
    <property type="protein sequence ID" value="Os02t0581300-01"/>
    <property type="gene ID" value="Os02g0581300"/>
</dbReference>
<dbReference type="KEGG" id="dosa:Os02g0581300"/>
<dbReference type="eggNOG" id="KOG1607">
    <property type="taxonomic scope" value="Eukaryota"/>
</dbReference>
<dbReference type="HOGENOM" id="CLU_028277_5_0_1"/>
<dbReference type="InParanoid" id="Q6EUN0"/>
<dbReference type="OMA" id="RYNFLRY"/>
<dbReference type="OrthoDB" id="537032at2759"/>
<dbReference type="Proteomes" id="UP000000763">
    <property type="component" value="Chromosome 2"/>
</dbReference>
<dbReference type="Proteomes" id="UP000059680">
    <property type="component" value="Chromosome 2"/>
</dbReference>
<dbReference type="GO" id="GO:0005783">
    <property type="term" value="C:endoplasmic reticulum"/>
    <property type="evidence" value="ECO:0000318"/>
    <property type="project" value="GO_Central"/>
</dbReference>
<dbReference type="GO" id="GO:0005789">
    <property type="term" value="C:endoplasmic reticulum membrane"/>
    <property type="evidence" value="ECO:0007669"/>
    <property type="project" value="UniProtKB-SubCell"/>
</dbReference>
<dbReference type="GO" id="GO:0050291">
    <property type="term" value="F:sphingosine N-acyltransferase activity"/>
    <property type="evidence" value="ECO:0000318"/>
    <property type="project" value="GO_Central"/>
</dbReference>
<dbReference type="GO" id="GO:0046513">
    <property type="term" value="P:ceramide biosynthetic process"/>
    <property type="evidence" value="ECO:0000318"/>
    <property type="project" value="GO_Central"/>
</dbReference>
<dbReference type="InterPro" id="IPR016439">
    <property type="entry name" value="Lag1/Lac1-like"/>
</dbReference>
<dbReference type="InterPro" id="IPR006634">
    <property type="entry name" value="TLC-dom"/>
</dbReference>
<dbReference type="PANTHER" id="PTHR12560:SF44">
    <property type="entry name" value="ASC1-LIKE PROTEIN 1"/>
    <property type="match status" value="1"/>
</dbReference>
<dbReference type="PANTHER" id="PTHR12560">
    <property type="entry name" value="LONGEVITY ASSURANCE FACTOR 1 LAG1"/>
    <property type="match status" value="1"/>
</dbReference>
<dbReference type="Pfam" id="PF03798">
    <property type="entry name" value="TRAM_LAG1_CLN8"/>
    <property type="match status" value="1"/>
</dbReference>
<dbReference type="PIRSF" id="PIRSF005225">
    <property type="entry name" value="LAG1_LAC1"/>
    <property type="match status" value="1"/>
</dbReference>
<dbReference type="SMART" id="SM00724">
    <property type="entry name" value="TLC"/>
    <property type="match status" value="1"/>
</dbReference>
<dbReference type="PROSITE" id="PS50922">
    <property type="entry name" value="TLC"/>
    <property type="match status" value="1"/>
</dbReference>
<feature type="chain" id="PRO_0000185523" description="ASC1-like protein 1">
    <location>
        <begin position="1"/>
        <end position="309"/>
    </location>
</feature>
<feature type="transmembrane region" description="Helical" evidence="2">
    <location>
        <begin position="27"/>
        <end position="47"/>
    </location>
</feature>
<feature type="transmembrane region" description="Helical" evidence="2">
    <location>
        <begin position="84"/>
        <end position="104"/>
    </location>
</feature>
<feature type="transmembrane region" description="Helical" evidence="2">
    <location>
        <begin position="130"/>
        <end position="150"/>
    </location>
</feature>
<feature type="transmembrane region" description="Helical" evidence="2">
    <location>
        <begin position="156"/>
        <end position="176"/>
    </location>
</feature>
<feature type="transmembrane region" description="Helical" evidence="2">
    <location>
        <begin position="215"/>
        <end position="235"/>
    </location>
</feature>
<feature type="transmembrane region" description="Helical" evidence="2">
    <location>
        <begin position="260"/>
        <end position="280"/>
    </location>
</feature>
<feature type="domain" description="TLC" evidence="3">
    <location>
        <begin position="75"/>
        <end position="289"/>
    </location>
</feature>
<evidence type="ECO:0000250" key="1"/>
<evidence type="ECO:0000255" key="2"/>
<evidence type="ECO:0000255" key="3">
    <source>
        <dbReference type="PROSITE-ProRule" id="PRU00205"/>
    </source>
</evidence>
<proteinExistence type="evidence at transcript level"/>
<sequence length="309" mass="36421">MGVAAAAGRLLAAVDWEREAYPAYRDFFALPLFAVFFLVVRYLLDCFVFEWIGRKLIFGKEKVDYEKEETRKKIRKFKESAWKCVYFLSGEILSLSVTYNEPWFTNTKYFWVGPGDQVWPDQKIKWKLKAVYMYAAGFYTYSIFALMFWETRRSDFGVSMSHHVATVALIVLSYVFRFARVGSVVLAIHDASDVFLEVGKMAKYSHCDLLANVAFLLFVVSWVLLRLTYFPFWILRSTSYEVLLTLDKKKHNFDGPIYYYVFNSLLFSLLVLHIYWWVLIYRMLVRQIKTRNVGDDVRSDSEGEDEHED</sequence>
<name>ASCL1_ORYSJ</name>
<keyword id="KW-0256">Endoplasmic reticulum</keyword>
<keyword id="KW-0444">Lipid biosynthesis</keyword>
<keyword id="KW-0443">Lipid metabolism</keyword>
<keyword id="KW-0472">Membrane</keyword>
<keyword id="KW-1185">Reference proteome</keyword>
<keyword id="KW-0812">Transmembrane</keyword>
<keyword id="KW-1133">Transmembrane helix</keyword>
<reference key="1">
    <citation type="journal article" date="2005" name="Nature">
        <title>The map-based sequence of the rice genome.</title>
        <authorList>
            <consortium name="International rice genome sequencing project (IRGSP)"/>
        </authorList>
    </citation>
    <scope>NUCLEOTIDE SEQUENCE [LARGE SCALE GENOMIC DNA]</scope>
    <source>
        <strain>cv. Nipponbare</strain>
    </source>
</reference>
<reference key="2">
    <citation type="journal article" date="2008" name="Nucleic Acids Res.">
        <title>The rice annotation project database (RAP-DB): 2008 update.</title>
        <authorList>
            <consortium name="The rice annotation project (RAP)"/>
        </authorList>
    </citation>
    <scope>GENOME REANNOTATION</scope>
    <source>
        <strain>cv. Nipponbare</strain>
    </source>
</reference>
<reference key="3">
    <citation type="journal article" date="2013" name="Rice">
        <title>Improvement of the Oryza sativa Nipponbare reference genome using next generation sequence and optical map data.</title>
        <authorList>
            <person name="Kawahara Y."/>
            <person name="de la Bastide M."/>
            <person name="Hamilton J.P."/>
            <person name="Kanamori H."/>
            <person name="McCombie W.R."/>
            <person name="Ouyang S."/>
            <person name="Schwartz D.C."/>
            <person name="Tanaka T."/>
            <person name="Wu J."/>
            <person name="Zhou S."/>
            <person name="Childs K.L."/>
            <person name="Davidson R.M."/>
            <person name="Lin H."/>
            <person name="Quesada-Ocampo L."/>
            <person name="Vaillancourt B."/>
            <person name="Sakai H."/>
            <person name="Lee S.S."/>
            <person name="Kim J."/>
            <person name="Numa H."/>
            <person name="Itoh T."/>
            <person name="Buell C.R."/>
            <person name="Matsumoto T."/>
        </authorList>
    </citation>
    <scope>GENOME REANNOTATION</scope>
    <source>
        <strain>cv. Nipponbare</strain>
    </source>
</reference>
<reference key="4">
    <citation type="journal article" date="2003" name="Science">
        <title>Collection, mapping, and annotation of over 28,000 cDNA clones from japonica rice.</title>
        <authorList>
            <consortium name="The rice full-length cDNA consortium"/>
        </authorList>
    </citation>
    <scope>NUCLEOTIDE SEQUENCE [LARGE SCALE MRNA]</scope>
    <source>
        <strain>cv. Nipponbare</strain>
    </source>
</reference>